<feature type="chain" id="PRO_0000283205" description="Putative F-box/kelch-repeat protein At2g44030">
    <location>
        <begin position="1"/>
        <end position="380"/>
    </location>
</feature>
<feature type="domain" description="F-box">
    <location>
        <begin position="16"/>
        <end position="66"/>
    </location>
</feature>
<feature type="repeat" description="Kelch 1">
    <location>
        <begin position="123"/>
        <end position="170"/>
    </location>
</feature>
<feature type="repeat" description="Kelch 2">
    <location>
        <begin position="172"/>
        <end position="219"/>
    </location>
</feature>
<name>FBK45_ARATH</name>
<organism>
    <name type="scientific">Arabidopsis thaliana</name>
    <name type="common">Mouse-ear cress</name>
    <dbReference type="NCBI Taxonomy" id="3702"/>
    <lineage>
        <taxon>Eukaryota</taxon>
        <taxon>Viridiplantae</taxon>
        <taxon>Streptophyta</taxon>
        <taxon>Embryophyta</taxon>
        <taxon>Tracheophyta</taxon>
        <taxon>Spermatophyta</taxon>
        <taxon>Magnoliopsida</taxon>
        <taxon>eudicotyledons</taxon>
        <taxon>Gunneridae</taxon>
        <taxon>Pentapetalae</taxon>
        <taxon>rosids</taxon>
        <taxon>malvids</taxon>
        <taxon>Brassicales</taxon>
        <taxon>Brassicaceae</taxon>
        <taxon>Camelineae</taxon>
        <taxon>Arabidopsis</taxon>
    </lineage>
</organism>
<gene>
    <name type="ordered locus">At2g44030</name>
    <name type="ORF">F6E13.16</name>
</gene>
<reference key="1">
    <citation type="journal article" date="1999" name="Nature">
        <title>Sequence and analysis of chromosome 2 of the plant Arabidopsis thaliana.</title>
        <authorList>
            <person name="Lin X."/>
            <person name="Kaul S."/>
            <person name="Rounsley S.D."/>
            <person name="Shea T.P."/>
            <person name="Benito M.-I."/>
            <person name="Town C.D."/>
            <person name="Fujii C.Y."/>
            <person name="Mason T.M."/>
            <person name="Bowman C.L."/>
            <person name="Barnstead M.E."/>
            <person name="Feldblyum T.V."/>
            <person name="Buell C.R."/>
            <person name="Ketchum K.A."/>
            <person name="Lee J.J."/>
            <person name="Ronning C.M."/>
            <person name="Koo H.L."/>
            <person name="Moffat K.S."/>
            <person name="Cronin L.A."/>
            <person name="Shen M."/>
            <person name="Pai G."/>
            <person name="Van Aken S."/>
            <person name="Umayam L."/>
            <person name="Tallon L.J."/>
            <person name="Gill J.E."/>
            <person name="Adams M.D."/>
            <person name="Carrera A.J."/>
            <person name="Creasy T.H."/>
            <person name="Goodman H.M."/>
            <person name="Somerville C.R."/>
            <person name="Copenhaver G.P."/>
            <person name="Preuss D."/>
            <person name="Nierman W.C."/>
            <person name="White O."/>
            <person name="Eisen J.A."/>
            <person name="Salzberg S.L."/>
            <person name="Fraser C.M."/>
            <person name="Venter J.C."/>
        </authorList>
    </citation>
    <scope>NUCLEOTIDE SEQUENCE [LARGE SCALE GENOMIC DNA]</scope>
    <source>
        <strain>cv. Columbia</strain>
    </source>
</reference>
<reference key="2">
    <citation type="journal article" date="2017" name="Plant J.">
        <title>Araport11: a complete reannotation of the Arabidopsis thaliana reference genome.</title>
        <authorList>
            <person name="Cheng C.Y."/>
            <person name="Krishnakumar V."/>
            <person name="Chan A.P."/>
            <person name="Thibaud-Nissen F."/>
            <person name="Schobel S."/>
            <person name="Town C.D."/>
        </authorList>
    </citation>
    <scope>GENOME REANNOTATION</scope>
    <source>
        <strain>cv. Columbia</strain>
    </source>
</reference>
<sequence length="380" mass="42860">MTTEEDMRSSSSESSPKSFLSLPYDVVFNCLSRVSRTHDPILSLVSKSFRSLLALPDLEAERFRILKNETCLYVCLNLNNNNNPNPSWFILSQTPKHKLIPLPSLPYPDPHPNCSTVVSTGSEIYLLGGFVAKEKRSRRAYVLDCKSHQWRRLPKMRIARKEAAANVIDGKINVYGGCSSEYHNSVNWGEIYDPMTQTWEPFPEGALNKEGVIPCALIKDGIAFPDCGLLISGKVYDTTTMDTLDYNTPMDKLDLCPNVCMLKIDNQDFQASVSDGKLKLVRCRGAMAWHWTVGGLEELSCNYLLSVASPGGGRRVTVWWKTYTKECKTEIWCALILLERELVWGVIEWSENVFTLPGSESDSDSNSFLLHYELVTLARH</sequence>
<proteinExistence type="predicted"/>
<accession>O80573</accession>
<protein>
    <recommendedName>
        <fullName>Putative F-box/kelch-repeat protein At2g44030</fullName>
    </recommendedName>
</protein>
<keyword id="KW-0880">Kelch repeat</keyword>
<keyword id="KW-1185">Reference proteome</keyword>
<keyword id="KW-0677">Repeat</keyword>
<dbReference type="EMBL" id="AC004005">
    <property type="protein sequence ID" value="AAC23411.1"/>
    <property type="molecule type" value="Genomic_DNA"/>
</dbReference>
<dbReference type="EMBL" id="CP002685">
    <property type="protein sequence ID" value="AEC10363.1"/>
    <property type="molecule type" value="Genomic_DNA"/>
</dbReference>
<dbReference type="PIR" id="T00683">
    <property type="entry name" value="T00683"/>
</dbReference>
<dbReference type="RefSeq" id="NP_181931.1">
    <property type="nucleotide sequence ID" value="NM_129965.1"/>
</dbReference>
<dbReference type="SMR" id="O80573"/>
<dbReference type="BioGRID" id="4344">
    <property type="interactions" value="1"/>
</dbReference>
<dbReference type="FunCoup" id="O80573">
    <property type="interactions" value="2"/>
</dbReference>
<dbReference type="STRING" id="3702.O80573"/>
<dbReference type="PaxDb" id="3702-AT2G44030.1"/>
<dbReference type="EnsemblPlants" id="AT2G44030.1">
    <property type="protein sequence ID" value="AT2G44030.1"/>
    <property type="gene ID" value="AT2G44030"/>
</dbReference>
<dbReference type="GeneID" id="819008"/>
<dbReference type="Gramene" id="AT2G44030.1">
    <property type="protein sequence ID" value="AT2G44030.1"/>
    <property type="gene ID" value="AT2G44030"/>
</dbReference>
<dbReference type="KEGG" id="ath:AT2G44030"/>
<dbReference type="Araport" id="AT2G44030"/>
<dbReference type="TAIR" id="AT2G44030"/>
<dbReference type="eggNOG" id="KOG1072">
    <property type="taxonomic scope" value="Eukaryota"/>
</dbReference>
<dbReference type="HOGENOM" id="CLU_032521_1_2_1"/>
<dbReference type="InParanoid" id="O80573"/>
<dbReference type="PhylomeDB" id="O80573"/>
<dbReference type="PRO" id="PR:O80573"/>
<dbReference type="Proteomes" id="UP000006548">
    <property type="component" value="Chromosome 2"/>
</dbReference>
<dbReference type="ExpressionAtlas" id="O80573">
    <property type="expression patterns" value="baseline and differential"/>
</dbReference>
<dbReference type="Gene3D" id="2.120.10.80">
    <property type="entry name" value="Kelch-type beta propeller"/>
    <property type="match status" value="1"/>
</dbReference>
<dbReference type="InterPro" id="IPR036047">
    <property type="entry name" value="F-box-like_dom_sf"/>
</dbReference>
<dbReference type="InterPro" id="IPR050354">
    <property type="entry name" value="F-box/kelch-repeat_ARATH"/>
</dbReference>
<dbReference type="InterPro" id="IPR001810">
    <property type="entry name" value="F-box_dom"/>
</dbReference>
<dbReference type="InterPro" id="IPR015915">
    <property type="entry name" value="Kelch-typ_b-propeller"/>
</dbReference>
<dbReference type="InterPro" id="IPR006652">
    <property type="entry name" value="Kelch_1"/>
</dbReference>
<dbReference type="PANTHER" id="PTHR24414:SF196">
    <property type="entry name" value="BNACNNG12250D PROTEIN"/>
    <property type="match status" value="1"/>
</dbReference>
<dbReference type="PANTHER" id="PTHR24414">
    <property type="entry name" value="F-BOX/KELCH-REPEAT PROTEIN SKIP4"/>
    <property type="match status" value="1"/>
</dbReference>
<dbReference type="Pfam" id="PF00646">
    <property type="entry name" value="F-box"/>
    <property type="match status" value="1"/>
</dbReference>
<dbReference type="Pfam" id="PF25210">
    <property type="entry name" value="Kelch_FKB95"/>
    <property type="match status" value="1"/>
</dbReference>
<dbReference type="SMART" id="SM00612">
    <property type="entry name" value="Kelch"/>
    <property type="match status" value="2"/>
</dbReference>
<dbReference type="SUPFAM" id="SSF81383">
    <property type="entry name" value="F-box domain"/>
    <property type="match status" value="1"/>
</dbReference>
<dbReference type="SUPFAM" id="SSF117281">
    <property type="entry name" value="Kelch motif"/>
    <property type="match status" value="1"/>
</dbReference>